<protein>
    <recommendedName>
        <fullName>Vacuolar protein sorting-associated protein 28 homolog 1</fullName>
    </recommendedName>
</protein>
<name>VP281_ARATH</name>
<sequence length="209" mass="23494">MEVKLWNDKREREMYENFAELYAIIKATEKLEKAYIRDLISPSEYETECQKLIVHFKTLSASLKDMVPNIERFAETYKMDCSAAVYRLVTSGVPATVEHRAAASASTSSSASVVAECVQNFITSMDSLKLNMVAVDQVYPLLSDLSASLNKLSILPPDFEGKIKMKEWLLRLSKMGASDELTEQQARQLHFDLESSYNSFMAALPNAGN</sequence>
<comment type="function">
    <text evidence="1">Component of the ESCRT-I complex (endosomal sorting complex required for transport I), a regulator of vesicular trafficking process. Required for the sorting of endocytic ubiquitinated cargos into multivesicular bodies (MVBs). Mediates the association to the ESCRT-0 complex (By similarity).</text>
</comment>
<comment type="subunit">
    <text evidence="4">Component of the endosomal sorting required for transport complex I (ESCRT-I), composed of ELC, VPS28 and VPS37. Interacts with ELC.</text>
</comment>
<comment type="interaction">
    <interactant intactId="EBI-3865310">
        <id>O65421</id>
    </interactant>
    <interactant intactId="EBI-4426557">
        <id>Q84MB2</id>
        <label>TIFY8</label>
    </interactant>
    <organismsDiffer>false</organismsDiffer>
    <experiments>3</experiments>
</comment>
<comment type="interaction">
    <interactant intactId="EBI-3865310">
        <id>O65421</id>
    </interactant>
    <interactant intactId="EBI-3865323">
        <id>Q0WTY4</id>
        <label>VPS2.2</label>
    </interactant>
    <organismsDiffer>false</organismsDiffer>
    <experiments>4</experiments>
</comment>
<comment type="interaction">
    <interactant intactId="EBI-3865310">
        <id>O65421</id>
    </interactant>
    <interactant intactId="EBI-3865264">
        <id>Q9SCP9</id>
        <label>VPS37-1</label>
    </interactant>
    <organismsDiffer>false</organismsDiffer>
    <experiments>3</experiments>
</comment>
<comment type="subcellular location">
    <subcellularLocation>
        <location evidence="1">Endosome</location>
    </subcellularLocation>
</comment>
<comment type="similarity">
    <text evidence="2 3">Belongs to the VPS28 family.</text>
</comment>
<gene>
    <name type="primary">VPS28-1</name>
    <name type="ordered locus">At4g21560</name>
    <name type="ORF">F17L22.20</name>
    <name type="ORF">F18E5.180</name>
</gene>
<accession>O65421</accession>
<feature type="chain" id="PRO_0000120956" description="Vacuolar protein sorting-associated protein 28 homolog 1">
    <location>
        <begin position="1"/>
        <end position="209"/>
    </location>
</feature>
<feature type="domain" description="VPS28 N-terminal" evidence="3">
    <location>
        <begin position="1"/>
        <end position="99"/>
    </location>
</feature>
<feature type="domain" description="VPS28 C-terminal" evidence="2">
    <location>
        <begin position="109"/>
        <end position="205"/>
    </location>
</feature>
<proteinExistence type="evidence at protein level"/>
<keyword id="KW-0967">Endosome</keyword>
<keyword id="KW-0653">Protein transport</keyword>
<keyword id="KW-1185">Reference proteome</keyword>
<keyword id="KW-0813">Transport</keyword>
<reference key="1">
    <citation type="journal article" date="1999" name="Nature">
        <title>Sequence and analysis of chromosome 4 of the plant Arabidopsis thaliana.</title>
        <authorList>
            <person name="Mayer K.F.X."/>
            <person name="Schueller C."/>
            <person name="Wambutt R."/>
            <person name="Murphy G."/>
            <person name="Volckaert G."/>
            <person name="Pohl T."/>
            <person name="Duesterhoeft A."/>
            <person name="Stiekema W."/>
            <person name="Entian K.-D."/>
            <person name="Terryn N."/>
            <person name="Harris B."/>
            <person name="Ansorge W."/>
            <person name="Brandt P."/>
            <person name="Grivell L.A."/>
            <person name="Rieger M."/>
            <person name="Weichselgartner M."/>
            <person name="de Simone V."/>
            <person name="Obermaier B."/>
            <person name="Mache R."/>
            <person name="Mueller M."/>
            <person name="Kreis M."/>
            <person name="Delseny M."/>
            <person name="Puigdomenech P."/>
            <person name="Watson M."/>
            <person name="Schmidtheini T."/>
            <person name="Reichert B."/>
            <person name="Portetelle D."/>
            <person name="Perez-Alonso M."/>
            <person name="Boutry M."/>
            <person name="Bancroft I."/>
            <person name="Vos P."/>
            <person name="Hoheisel J."/>
            <person name="Zimmermann W."/>
            <person name="Wedler H."/>
            <person name="Ridley P."/>
            <person name="Langham S.-A."/>
            <person name="McCullagh B."/>
            <person name="Bilham L."/>
            <person name="Robben J."/>
            <person name="van der Schueren J."/>
            <person name="Grymonprez B."/>
            <person name="Chuang Y.-J."/>
            <person name="Vandenbussche F."/>
            <person name="Braeken M."/>
            <person name="Weltjens I."/>
            <person name="Voet M."/>
            <person name="Bastiaens I."/>
            <person name="Aert R."/>
            <person name="Defoor E."/>
            <person name="Weitzenegger T."/>
            <person name="Bothe G."/>
            <person name="Ramsperger U."/>
            <person name="Hilbert H."/>
            <person name="Braun M."/>
            <person name="Holzer E."/>
            <person name="Brandt A."/>
            <person name="Peters S."/>
            <person name="van Staveren M."/>
            <person name="Dirkse W."/>
            <person name="Mooijman P."/>
            <person name="Klein Lankhorst R."/>
            <person name="Rose M."/>
            <person name="Hauf J."/>
            <person name="Koetter P."/>
            <person name="Berneiser S."/>
            <person name="Hempel S."/>
            <person name="Feldpausch M."/>
            <person name="Lamberth S."/>
            <person name="Van den Daele H."/>
            <person name="De Keyser A."/>
            <person name="Buysshaert C."/>
            <person name="Gielen J."/>
            <person name="Villarroel R."/>
            <person name="De Clercq R."/>
            <person name="van Montagu M."/>
            <person name="Rogers J."/>
            <person name="Cronin A."/>
            <person name="Quail M.A."/>
            <person name="Bray-Allen S."/>
            <person name="Clark L."/>
            <person name="Doggett J."/>
            <person name="Hall S."/>
            <person name="Kay M."/>
            <person name="Lennard N."/>
            <person name="McLay K."/>
            <person name="Mayes R."/>
            <person name="Pettett A."/>
            <person name="Rajandream M.A."/>
            <person name="Lyne M."/>
            <person name="Benes V."/>
            <person name="Rechmann S."/>
            <person name="Borkova D."/>
            <person name="Bloecker H."/>
            <person name="Scharfe M."/>
            <person name="Grimm M."/>
            <person name="Loehnert T.-H."/>
            <person name="Dose S."/>
            <person name="de Haan M."/>
            <person name="Maarse A.C."/>
            <person name="Schaefer M."/>
            <person name="Mueller-Auer S."/>
            <person name="Gabel C."/>
            <person name="Fuchs M."/>
            <person name="Fartmann B."/>
            <person name="Granderath K."/>
            <person name="Dauner D."/>
            <person name="Herzl A."/>
            <person name="Neumann S."/>
            <person name="Argiriou A."/>
            <person name="Vitale D."/>
            <person name="Liguori R."/>
            <person name="Piravandi E."/>
            <person name="Massenet O."/>
            <person name="Quigley F."/>
            <person name="Clabauld G."/>
            <person name="Muendlein A."/>
            <person name="Felber R."/>
            <person name="Schnabl S."/>
            <person name="Hiller R."/>
            <person name="Schmidt W."/>
            <person name="Lecharny A."/>
            <person name="Aubourg S."/>
            <person name="Chefdor F."/>
            <person name="Cooke R."/>
            <person name="Berger C."/>
            <person name="Monfort A."/>
            <person name="Casacuberta E."/>
            <person name="Gibbons T."/>
            <person name="Weber N."/>
            <person name="Vandenbol M."/>
            <person name="Bargues M."/>
            <person name="Terol J."/>
            <person name="Torres A."/>
            <person name="Perez-Perez A."/>
            <person name="Purnelle B."/>
            <person name="Bent E."/>
            <person name="Johnson S."/>
            <person name="Tacon D."/>
            <person name="Jesse T."/>
            <person name="Heijnen L."/>
            <person name="Schwarz S."/>
            <person name="Scholler P."/>
            <person name="Heber S."/>
            <person name="Francs P."/>
            <person name="Bielke C."/>
            <person name="Frishman D."/>
            <person name="Haase D."/>
            <person name="Lemcke K."/>
            <person name="Mewes H.-W."/>
            <person name="Stocker S."/>
            <person name="Zaccaria P."/>
            <person name="Bevan M."/>
            <person name="Wilson R.K."/>
            <person name="de la Bastide M."/>
            <person name="Habermann K."/>
            <person name="Parnell L."/>
            <person name="Dedhia N."/>
            <person name="Gnoj L."/>
            <person name="Schutz K."/>
            <person name="Huang E."/>
            <person name="Spiegel L."/>
            <person name="Sekhon M."/>
            <person name="Murray J."/>
            <person name="Sheet P."/>
            <person name="Cordes M."/>
            <person name="Abu-Threideh J."/>
            <person name="Stoneking T."/>
            <person name="Kalicki J."/>
            <person name="Graves T."/>
            <person name="Harmon G."/>
            <person name="Edwards J."/>
            <person name="Latreille P."/>
            <person name="Courtney L."/>
            <person name="Cloud J."/>
            <person name="Abbott A."/>
            <person name="Scott K."/>
            <person name="Johnson D."/>
            <person name="Minx P."/>
            <person name="Bentley D."/>
            <person name="Fulton B."/>
            <person name="Miller N."/>
            <person name="Greco T."/>
            <person name="Kemp K."/>
            <person name="Kramer J."/>
            <person name="Fulton L."/>
            <person name="Mardis E."/>
            <person name="Dante M."/>
            <person name="Pepin K."/>
            <person name="Hillier L.W."/>
            <person name="Nelson J."/>
            <person name="Spieth J."/>
            <person name="Ryan E."/>
            <person name="Andrews S."/>
            <person name="Geisel C."/>
            <person name="Layman D."/>
            <person name="Du H."/>
            <person name="Ali J."/>
            <person name="Berghoff A."/>
            <person name="Jones K."/>
            <person name="Drone K."/>
            <person name="Cotton M."/>
            <person name="Joshu C."/>
            <person name="Antonoiu B."/>
            <person name="Zidanic M."/>
            <person name="Strong C."/>
            <person name="Sun H."/>
            <person name="Lamar B."/>
            <person name="Yordan C."/>
            <person name="Ma P."/>
            <person name="Zhong J."/>
            <person name="Preston R."/>
            <person name="Vil D."/>
            <person name="Shekher M."/>
            <person name="Matero A."/>
            <person name="Shah R."/>
            <person name="Swaby I.K."/>
            <person name="O'Shaughnessy A."/>
            <person name="Rodriguez M."/>
            <person name="Hoffman J."/>
            <person name="Till S."/>
            <person name="Granat S."/>
            <person name="Shohdy N."/>
            <person name="Hasegawa A."/>
            <person name="Hameed A."/>
            <person name="Lodhi M."/>
            <person name="Johnson A."/>
            <person name="Chen E."/>
            <person name="Marra M.A."/>
            <person name="Martienssen R."/>
            <person name="McCombie W.R."/>
        </authorList>
    </citation>
    <scope>NUCLEOTIDE SEQUENCE [LARGE SCALE GENOMIC DNA]</scope>
    <source>
        <strain>cv. Columbia</strain>
    </source>
</reference>
<reference key="2">
    <citation type="journal article" date="2017" name="Plant J.">
        <title>Araport11: a complete reannotation of the Arabidopsis thaliana reference genome.</title>
        <authorList>
            <person name="Cheng C.Y."/>
            <person name="Krishnakumar V."/>
            <person name="Chan A.P."/>
            <person name="Thibaud-Nissen F."/>
            <person name="Schobel S."/>
            <person name="Town C.D."/>
        </authorList>
    </citation>
    <scope>GENOME REANNOTATION</scope>
    <source>
        <strain>cv. Columbia</strain>
    </source>
</reference>
<reference key="3">
    <citation type="journal article" date="2003" name="Science">
        <title>Empirical analysis of transcriptional activity in the Arabidopsis genome.</title>
        <authorList>
            <person name="Yamada K."/>
            <person name="Lim J."/>
            <person name="Dale J.M."/>
            <person name="Chen H."/>
            <person name="Shinn P."/>
            <person name="Palm C.J."/>
            <person name="Southwick A.M."/>
            <person name="Wu H.C."/>
            <person name="Kim C.J."/>
            <person name="Nguyen M."/>
            <person name="Pham P.K."/>
            <person name="Cheuk R.F."/>
            <person name="Karlin-Newmann G."/>
            <person name="Liu S.X."/>
            <person name="Lam B."/>
            <person name="Sakano H."/>
            <person name="Wu T."/>
            <person name="Yu G."/>
            <person name="Miranda M."/>
            <person name="Quach H.L."/>
            <person name="Tripp M."/>
            <person name="Chang C.H."/>
            <person name="Lee J.M."/>
            <person name="Toriumi M.J."/>
            <person name="Chan M.M."/>
            <person name="Tang C.C."/>
            <person name="Onodera C.S."/>
            <person name="Deng J.M."/>
            <person name="Akiyama K."/>
            <person name="Ansari Y."/>
            <person name="Arakawa T."/>
            <person name="Banh J."/>
            <person name="Banno F."/>
            <person name="Bowser L."/>
            <person name="Brooks S.Y."/>
            <person name="Carninci P."/>
            <person name="Chao Q."/>
            <person name="Choy N."/>
            <person name="Enju A."/>
            <person name="Goldsmith A.D."/>
            <person name="Gurjal M."/>
            <person name="Hansen N.F."/>
            <person name="Hayashizaki Y."/>
            <person name="Johnson-Hopson C."/>
            <person name="Hsuan V.W."/>
            <person name="Iida K."/>
            <person name="Karnes M."/>
            <person name="Khan S."/>
            <person name="Koesema E."/>
            <person name="Ishida J."/>
            <person name="Jiang P.X."/>
            <person name="Jones T."/>
            <person name="Kawai J."/>
            <person name="Kamiya A."/>
            <person name="Meyers C."/>
            <person name="Nakajima M."/>
            <person name="Narusaka M."/>
            <person name="Seki M."/>
            <person name="Sakurai T."/>
            <person name="Satou M."/>
            <person name="Tamse R."/>
            <person name="Vaysberg M."/>
            <person name="Wallender E.K."/>
            <person name="Wong C."/>
            <person name="Yamamura Y."/>
            <person name="Yuan S."/>
            <person name="Shinozaki K."/>
            <person name="Davis R.W."/>
            <person name="Theologis A."/>
            <person name="Ecker J.R."/>
        </authorList>
    </citation>
    <scope>NUCLEOTIDE SEQUENCE [LARGE SCALE MRNA]</scope>
    <source>
        <strain>cv. Columbia</strain>
    </source>
</reference>
<reference key="4">
    <citation type="journal article" date="2006" name="Development">
        <title>The Arabidopsis elch mutant reveals functions of an ESCRT component in cytokinesis.</title>
        <authorList>
            <person name="Spitzer C."/>
            <person name="Schellmann S."/>
            <person name="Sabovljevic A."/>
            <person name="Shahriari M."/>
            <person name="Keshavaiah C."/>
            <person name="Bechtold N."/>
            <person name="Herzog M."/>
            <person name="Mueller S."/>
            <person name="Hanisch F.-G."/>
            <person name="Huelskamp M."/>
        </authorList>
    </citation>
    <scope>IDENTIFICATION</scope>
    <scope>NOMENCLATURE</scope>
    <scope>INTERACTION WITH ELC</scope>
</reference>
<reference key="5">
    <citation type="journal article" date="2006" name="Trends Plant Sci.">
        <title>Exploring the ESCRTing machinery in eukaryotes.</title>
        <authorList>
            <person name="Winter V."/>
            <person name="Hauser M.-T."/>
        </authorList>
    </citation>
    <scope>IDENTIFICATION</scope>
</reference>
<dbReference type="EMBL" id="AL022603">
    <property type="protein sequence ID" value="CAA18720.1"/>
    <property type="molecule type" value="Genomic_DNA"/>
</dbReference>
<dbReference type="EMBL" id="AL035527">
    <property type="protein sequence ID" value="CAB36800.1"/>
    <property type="molecule type" value="Genomic_DNA"/>
</dbReference>
<dbReference type="EMBL" id="AL161555">
    <property type="protein sequence ID" value="CAB81263.1"/>
    <property type="molecule type" value="Genomic_DNA"/>
</dbReference>
<dbReference type="EMBL" id="CP002687">
    <property type="protein sequence ID" value="AEE84469.1"/>
    <property type="molecule type" value="Genomic_DNA"/>
</dbReference>
<dbReference type="EMBL" id="CP002687">
    <property type="protein sequence ID" value="AEE84470.1"/>
    <property type="molecule type" value="Genomic_DNA"/>
</dbReference>
<dbReference type="EMBL" id="CP002687">
    <property type="protein sequence ID" value="AEE84471.1"/>
    <property type="molecule type" value="Genomic_DNA"/>
</dbReference>
<dbReference type="EMBL" id="AY136475">
    <property type="protein sequence ID" value="AAM97140.1"/>
    <property type="molecule type" value="mRNA"/>
</dbReference>
<dbReference type="EMBL" id="BT006261">
    <property type="protein sequence ID" value="AAP13369.1"/>
    <property type="molecule type" value="mRNA"/>
</dbReference>
<dbReference type="PIR" id="T05164">
    <property type="entry name" value="T05164"/>
</dbReference>
<dbReference type="RefSeq" id="NP_001320024.1">
    <property type="nucleotide sequence ID" value="NM_001341499.1"/>
</dbReference>
<dbReference type="RefSeq" id="NP_193887.1">
    <property type="nucleotide sequence ID" value="NM_118276.4"/>
</dbReference>
<dbReference type="RefSeq" id="NP_974585.1">
    <property type="nucleotide sequence ID" value="NM_202856.3"/>
</dbReference>
<dbReference type="SMR" id="O65421"/>
<dbReference type="BioGRID" id="13530">
    <property type="interactions" value="8"/>
</dbReference>
<dbReference type="FunCoup" id="O65421">
    <property type="interactions" value="4081"/>
</dbReference>
<dbReference type="IntAct" id="O65421">
    <property type="interactions" value="6"/>
</dbReference>
<dbReference type="STRING" id="3702.O65421"/>
<dbReference type="TCDB" id="3.A.31.1.2">
    <property type="family name" value="the endosomal sorting complexes required for transport iii (escrt-iii) family"/>
</dbReference>
<dbReference type="PaxDb" id="3702-AT4G21560.3"/>
<dbReference type="ProteomicsDB" id="242682"/>
<dbReference type="EnsemblPlants" id="AT4G21560.1">
    <property type="protein sequence ID" value="AT4G21560.1"/>
    <property type="gene ID" value="AT4G21560"/>
</dbReference>
<dbReference type="EnsemblPlants" id="AT4G21560.2">
    <property type="protein sequence ID" value="AT4G21560.2"/>
    <property type="gene ID" value="AT4G21560"/>
</dbReference>
<dbReference type="EnsemblPlants" id="AT4G21560.3">
    <property type="protein sequence ID" value="AT4G21560.3"/>
    <property type="gene ID" value="AT4G21560"/>
</dbReference>
<dbReference type="GeneID" id="828241"/>
<dbReference type="Gramene" id="AT4G21560.1">
    <property type="protein sequence ID" value="AT4G21560.1"/>
    <property type="gene ID" value="AT4G21560"/>
</dbReference>
<dbReference type="Gramene" id="AT4G21560.2">
    <property type="protein sequence ID" value="AT4G21560.2"/>
    <property type="gene ID" value="AT4G21560"/>
</dbReference>
<dbReference type="Gramene" id="AT4G21560.3">
    <property type="protein sequence ID" value="AT4G21560.3"/>
    <property type="gene ID" value="AT4G21560"/>
</dbReference>
<dbReference type="KEGG" id="ath:AT4G21560"/>
<dbReference type="Araport" id="AT4G21560"/>
<dbReference type="TAIR" id="AT4G21560">
    <property type="gene designation" value="VPS28-1"/>
</dbReference>
<dbReference type="eggNOG" id="KOG3284">
    <property type="taxonomic scope" value="Eukaryota"/>
</dbReference>
<dbReference type="HOGENOM" id="CLU_076417_1_0_1"/>
<dbReference type="InParanoid" id="O65421"/>
<dbReference type="OMA" id="NAREREX"/>
<dbReference type="PhylomeDB" id="O65421"/>
<dbReference type="PRO" id="PR:O65421"/>
<dbReference type="Proteomes" id="UP000006548">
    <property type="component" value="Chromosome 4"/>
</dbReference>
<dbReference type="ExpressionAtlas" id="O65421">
    <property type="expression patterns" value="baseline and differential"/>
</dbReference>
<dbReference type="GO" id="GO:0005829">
    <property type="term" value="C:cytosol"/>
    <property type="evidence" value="ECO:0007005"/>
    <property type="project" value="TAIR"/>
</dbReference>
<dbReference type="GO" id="GO:0000813">
    <property type="term" value="C:ESCRT I complex"/>
    <property type="evidence" value="ECO:0000250"/>
    <property type="project" value="TAIR"/>
</dbReference>
<dbReference type="GO" id="GO:0005794">
    <property type="term" value="C:Golgi apparatus"/>
    <property type="evidence" value="ECO:0000314"/>
    <property type="project" value="TAIR"/>
</dbReference>
<dbReference type="GO" id="GO:0005802">
    <property type="term" value="C:trans-Golgi network"/>
    <property type="evidence" value="ECO:0000314"/>
    <property type="project" value="TAIR"/>
</dbReference>
<dbReference type="GO" id="GO:0032509">
    <property type="term" value="P:endosome transport via multivesicular body sorting pathway"/>
    <property type="evidence" value="ECO:0007669"/>
    <property type="project" value="InterPro"/>
</dbReference>
<dbReference type="GO" id="GO:0015031">
    <property type="term" value="P:protein transport"/>
    <property type="evidence" value="ECO:0007669"/>
    <property type="project" value="UniProtKB-KW"/>
</dbReference>
<dbReference type="FunFam" id="1.20.120.1130:FF:000001">
    <property type="entry name" value="Vacuolar protein sorting-associated protein 28 homolog"/>
    <property type="match status" value="1"/>
</dbReference>
<dbReference type="FunFam" id="1.20.1440.200:FF:000002">
    <property type="entry name" value="Vacuolar protein sorting-associated protein 28 homolog"/>
    <property type="match status" value="1"/>
</dbReference>
<dbReference type="Gene3D" id="1.20.120.1130">
    <property type="match status" value="1"/>
</dbReference>
<dbReference type="Gene3D" id="1.20.1440.200">
    <property type="match status" value="1"/>
</dbReference>
<dbReference type="InterPro" id="IPR037202">
    <property type="entry name" value="ESCRT_assembly_dom"/>
</dbReference>
<dbReference type="InterPro" id="IPR007143">
    <property type="entry name" value="Vps28"/>
</dbReference>
<dbReference type="InterPro" id="IPR017899">
    <property type="entry name" value="VPS28_C"/>
</dbReference>
<dbReference type="InterPro" id="IPR037206">
    <property type="entry name" value="VPS28_C_sf"/>
</dbReference>
<dbReference type="InterPro" id="IPR017898">
    <property type="entry name" value="VPS28_N"/>
</dbReference>
<dbReference type="InterPro" id="IPR038358">
    <property type="entry name" value="VPS28_N_sf"/>
</dbReference>
<dbReference type="PANTHER" id="PTHR12937">
    <property type="entry name" value="VACUOLAR PROTEIN SORTING 28, ISOFORM 2 VPS28"/>
    <property type="match status" value="1"/>
</dbReference>
<dbReference type="PANTHER" id="PTHR12937:SF3">
    <property type="entry name" value="VACUOLAR PROTEIN SORTING-ASSOCIATED PROTEIN 28 HOMOLOG 1"/>
    <property type="match status" value="1"/>
</dbReference>
<dbReference type="Pfam" id="PF03997">
    <property type="entry name" value="VPS28"/>
    <property type="match status" value="1"/>
</dbReference>
<dbReference type="PIRSF" id="PIRSF017535">
    <property type="entry name" value="VPS28"/>
    <property type="match status" value="1"/>
</dbReference>
<dbReference type="SUPFAM" id="SSF140111">
    <property type="entry name" value="Endosomal sorting complex assembly domain"/>
    <property type="match status" value="1"/>
</dbReference>
<dbReference type="SUPFAM" id="SSF140427">
    <property type="entry name" value="VPS28 C-terminal domain-like"/>
    <property type="match status" value="1"/>
</dbReference>
<dbReference type="PROSITE" id="PS51310">
    <property type="entry name" value="VPS28_C"/>
    <property type="match status" value="1"/>
</dbReference>
<dbReference type="PROSITE" id="PS51313">
    <property type="entry name" value="VPS28_N"/>
    <property type="match status" value="1"/>
</dbReference>
<organism>
    <name type="scientific">Arabidopsis thaliana</name>
    <name type="common">Mouse-ear cress</name>
    <dbReference type="NCBI Taxonomy" id="3702"/>
    <lineage>
        <taxon>Eukaryota</taxon>
        <taxon>Viridiplantae</taxon>
        <taxon>Streptophyta</taxon>
        <taxon>Embryophyta</taxon>
        <taxon>Tracheophyta</taxon>
        <taxon>Spermatophyta</taxon>
        <taxon>Magnoliopsida</taxon>
        <taxon>eudicotyledons</taxon>
        <taxon>Gunneridae</taxon>
        <taxon>Pentapetalae</taxon>
        <taxon>rosids</taxon>
        <taxon>malvids</taxon>
        <taxon>Brassicales</taxon>
        <taxon>Brassicaceae</taxon>
        <taxon>Camelineae</taxon>
        <taxon>Arabidopsis</taxon>
    </lineage>
</organism>
<evidence type="ECO:0000250" key="1"/>
<evidence type="ECO:0000255" key="2">
    <source>
        <dbReference type="PROSITE-ProRule" id="PRU00642"/>
    </source>
</evidence>
<evidence type="ECO:0000255" key="3">
    <source>
        <dbReference type="PROSITE-ProRule" id="PRU00645"/>
    </source>
</evidence>
<evidence type="ECO:0000269" key="4">
    <source>
    </source>
</evidence>